<comment type="function">
    <text evidence="1">Small GTPase required for proper nuclear import of RNA polymerase II (RNAPII). May act at an RNAP assembly step prior to nuclear import.</text>
</comment>
<comment type="subunit">
    <text evidence="1">Heterodimers with gpn2 or fet5/gpn3. Binds to RNA polymerase II (RNAPII).</text>
</comment>
<comment type="subcellular location">
    <subcellularLocation>
        <location evidence="5">Cytoplasm</location>
    </subcellularLocation>
</comment>
<comment type="similarity">
    <text evidence="7">Belongs to the GPN-loop GTPase family.</text>
</comment>
<evidence type="ECO:0000250" key="1">
    <source>
        <dbReference type="UniProtKB" id="P47122"/>
    </source>
</evidence>
<evidence type="ECO:0000250" key="2">
    <source>
        <dbReference type="UniProtKB" id="Q9UYR9"/>
    </source>
</evidence>
<evidence type="ECO:0000255" key="3"/>
<evidence type="ECO:0000256" key="4">
    <source>
        <dbReference type="SAM" id="MobiDB-lite"/>
    </source>
</evidence>
<evidence type="ECO:0000269" key="5">
    <source>
    </source>
</evidence>
<evidence type="ECO:0000269" key="6">
    <source>
    </source>
</evidence>
<evidence type="ECO:0000305" key="7"/>
<evidence type="ECO:0000312" key="8">
    <source>
        <dbReference type="PomBase" id="SPBC119.15"/>
    </source>
</evidence>
<dbReference type="EC" id="3.6.5.-" evidence="1"/>
<dbReference type="EMBL" id="CU329671">
    <property type="protein sequence ID" value="CAA17930.1"/>
    <property type="molecule type" value="Genomic_DNA"/>
</dbReference>
<dbReference type="PIR" id="T39313">
    <property type="entry name" value="T39313"/>
</dbReference>
<dbReference type="SMR" id="O42906"/>
<dbReference type="FunCoup" id="O42906">
    <property type="interactions" value="629"/>
</dbReference>
<dbReference type="STRING" id="284812.O42906"/>
<dbReference type="iPTMnet" id="O42906"/>
<dbReference type="PaxDb" id="4896-SPBC119.15.1"/>
<dbReference type="EnsemblFungi" id="SPBC119.15.1">
    <property type="protein sequence ID" value="SPBC119.15.1:pep"/>
    <property type="gene ID" value="SPBC119.15"/>
</dbReference>
<dbReference type="KEGG" id="spo:2540123"/>
<dbReference type="PomBase" id="SPBC119.15"/>
<dbReference type="VEuPathDB" id="FungiDB:SPBC119.15"/>
<dbReference type="eggNOG" id="KOG1532">
    <property type="taxonomic scope" value="Eukaryota"/>
</dbReference>
<dbReference type="HOGENOM" id="CLU_037460_1_2_1"/>
<dbReference type="InParanoid" id="O42906"/>
<dbReference type="OMA" id="MIIVFNK"/>
<dbReference type="PhylomeDB" id="O42906"/>
<dbReference type="PRO" id="PR:O42906"/>
<dbReference type="Proteomes" id="UP000002485">
    <property type="component" value="Chromosome II"/>
</dbReference>
<dbReference type="GO" id="GO:0005829">
    <property type="term" value="C:cytosol"/>
    <property type="evidence" value="ECO:0007005"/>
    <property type="project" value="PomBase"/>
</dbReference>
<dbReference type="GO" id="GO:0016887">
    <property type="term" value="F:ATP hydrolysis activity"/>
    <property type="evidence" value="ECO:0000266"/>
    <property type="project" value="PomBase"/>
</dbReference>
<dbReference type="GO" id="GO:0005525">
    <property type="term" value="F:GTP binding"/>
    <property type="evidence" value="ECO:0007669"/>
    <property type="project" value="UniProtKB-KW"/>
</dbReference>
<dbReference type="GO" id="GO:0003924">
    <property type="term" value="F:GTPase activity"/>
    <property type="evidence" value="ECO:0000318"/>
    <property type="project" value="GO_Central"/>
</dbReference>
<dbReference type="GO" id="GO:1990114">
    <property type="term" value="P:RNA polymerase II core complex assembly"/>
    <property type="evidence" value="ECO:0000250"/>
    <property type="project" value="PomBase"/>
</dbReference>
<dbReference type="CDD" id="cd17870">
    <property type="entry name" value="GPN1"/>
    <property type="match status" value="1"/>
</dbReference>
<dbReference type="FunFam" id="3.40.50.300:FF:000579">
    <property type="entry name" value="GPN-loop GTPase"/>
    <property type="match status" value="1"/>
</dbReference>
<dbReference type="Gene3D" id="3.40.50.300">
    <property type="entry name" value="P-loop containing nucleotide triphosphate hydrolases"/>
    <property type="match status" value="1"/>
</dbReference>
<dbReference type="InterPro" id="IPR004130">
    <property type="entry name" value="Gpn"/>
</dbReference>
<dbReference type="InterPro" id="IPR030230">
    <property type="entry name" value="Gpn1/Npa3/XAB1"/>
</dbReference>
<dbReference type="InterPro" id="IPR027417">
    <property type="entry name" value="P-loop_NTPase"/>
</dbReference>
<dbReference type="PANTHER" id="PTHR21231:SF8">
    <property type="entry name" value="GPN-LOOP GTPASE 1"/>
    <property type="match status" value="1"/>
</dbReference>
<dbReference type="PANTHER" id="PTHR21231">
    <property type="entry name" value="XPA-BINDING PROTEIN 1-RELATED"/>
    <property type="match status" value="1"/>
</dbReference>
<dbReference type="Pfam" id="PF03029">
    <property type="entry name" value="ATP_bind_1"/>
    <property type="match status" value="1"/>
</dbReference>
<dbReference type="PRINTS" id="PR00449">
    <property type="entry name" value="RASTRNSFRMNG"/>
</dbReference>
<dbReference type="SUPFAM" id="SSF52540">
    <property type="entry name" value="P-loop containing nucleoside triphosphate hydrolases"/>
    <property type="match status" value="1"/>
</dbReference>
<protein>
    <recommendedName>
        <fullName evidence="1">GPN-loop GTPase 1</fullName>
        <ecNumber evidence="1">3.6.5.-</ecNumber>
    </recommendedName>
</protein>
<gene>
    <name evidence="8" type="ORF">SPBC119.15</name>
</gene>
<keyword id="KW-0175">Coiled coil</keyword>
<keyword id="KW-0963">Cytoplasm</keyword>
<keyword id="KW-0342">GTP-binding</keyword>
<keyword id="KW-0378">Hydrolase</keyword>
<keyword id="KW-0547">Nucleotide-binding</keyword>
<keyword id="KW-0597">Phosphoprotein</keyword>
<keyword id="KW-1185">Reference proteome</keyword>
<proteinExistence type="evidence at protein level"/>
<sequence length="367" mass="41642">MTDKEKKPCAIIVVGMAGSGKTTFMQQLNAHLHSKNKPPYILNLDPAVRNLPYEANIDIRDTINYKEVMKQYNLGPNGGIMTSLNLFVTKFDQVLKILEKRAPTVDHILIDTPGQIEIFQWSASGSIICDTLASSWPTCIAYVVDTPRATSTSTWMSSMLYACSMLYKAKLPLIIVYNKCDVQDSEFAKKWMTDFEEFQQAVTKDEGMSSEGATSGYMGSLVNSMSLMLEEFYRHLDFVSCSSVTGEGMDDFLEAVKAKVKEYEEEYVPEMERMKEIQRQTKERQKEAQLSKLMKDMHVSKDKEDVGLTVSDAEDEYNGELVDPDEDDGLTAEDREDMIKQYRVALGISDDISDEKLLEMLTERMKQ</sequence>
<organism>
    <name type="scientific">Schizosaccharomyces pombe (strain 972 / ATCC 24843)</name>
    <name type="common">Fission yeast</name>
    <dbReference type="NCBI Taxonomy" id="284812"/>
    <lineage>
        <taxon>Eukaryota</taxon>
        <taxon>Fungi</taxon>
        <taxon>Dikarya</taxon>
        <taxon>Ascomycota</taxon>
        <taxon>Taphrinomycotina</taxon>
        <taxon>Schizosaccharomycetes</taxon>
        <taxon>Schizosaccharomycetales</taxon>
        <taxon>Schizosaccharomycetaceae</taxon>
        <taxon>Schizosaccharomyces</taxon>
    </lineage>
</organism>
<accession>O42906</accession>
<feature type="chain" id="PRO_0000315977" description="GPN-loop GTPase 1">
    <location>
        <begin position="1"/>
        <end position="367"/>
    </location>
</feature>
<feature type="region of interest" description="Disordered" evidence="4">
    <location>
        <begin position="306"/>
        <end position="332"/>
    </location>
</feature>
<feature type="coiled-coil region" evidence="3">
    <location>
        <begin position="247"/>
        <end position="290"/>
    </location>
</feature>
<feature type="short sequence motif" description="Gly-Pro-Asn (GPN)-loop; involved in dimer interface" evidence="2">
    <location>
        <begin position="75"/>
        <end position="77"/>
    </location>
</feature>
<feature type="compositionally biased region" description="Acidic residues" evidence="4">
    <location>
        <begin position="312"/>
        <end position="332"/>
    </location>
</feature>
<feature type="binding site" evidence="2">
    <location>
        <begin position="15"/>
        <end position="22"/>
    </location>
    <ligand>
        <name>GTP</name>
        <dbReference type="ChEBI" id="CHEBI:37565"/>
    </ligand>
</feature>
<feature type="binding site" evidence="2">
    <location>
        <begin position="18"/>
        <end position="23"/>
    </location>
    <ligand>
        <name>GTP</name>
        <dbReference type="ChEBI" id="CHEBI:37565"/>
    </ligand>
</feature>
<feature type="binding site" evidence="2">
    <location>
        <begin position="178"/>
        <end position="181"/>
    </location>
    <ligand>
        <name>GTP</name>
        <dbReference type="ChEBI" id="CHEBI:37565"/>
    </ligand>
</feature>
<feature type="site" description="Stabilizes the phosphate intermediate; shared with dimeric partner" evidence="2">
    <location>
        <position position="77"/>
    </location>
</feature>
<feature type="modified residue" description="Phosphoserine" evidence="6">
    <location>
        <position position="311"/>
    </location>
</feature>
<name>GPN1_SCHPO</name>
<reference key="1">
    <citation type="journal article" date="2002" name="Nature">
        <title>The genome sequence of Schizosaccharomyces pombe.</title>
        <authorList>
            <person name="Wood V."/>
            <person name="Gwilliam R."/>
            <person name="Rajandream M.A."/>
            <person name="Lyne M.H."/>
            <person name="Lyne R."/>
            <person name="Stewart A."/>
            <person name="Sgouros J.G."/>
            <person name="Peat N."/>
            <person name="Hayles J."/>
            <person name="Baker S.G."/>
            <person name="Basham D."/>
            <person name="Bowman S."/>
            <person name="Brooks K."/>
            <person name="Brown D."/>
            <person name="Brown S."/>
            <person name="Chillingworth T."/>
            <person name="Churcher C.M."/>
            <person name="Collins M."/>
            <person name="Connor R."/>
            <person name="Cronin A."/>
            <person name="Davis P."/>
            <person name="Feltwell T."/>
            <person name="Fraser A."/>
            <person name="Gentles S."/>
            <person name="Goble A."/>
            <person name="Hamlin N."/>
            <person name="Harris D.E."/>
            <person name="Hidalgo J."/>
            <person name="Hodgson G."/>
            <person name="Holroyd S."/>
            <person name="Hornsby T."/>
            <person name="Howarth S."/>
            <person name="Huckle E.J."/>
            <person name="Hunt S."/>
            <person name="Jagels K."/>
            <person name="James K.D."/>
            <person name="Jones L."/>
            <person name="Jones M."/>
            <person name="Leather S."/>
            <person name="McDonald S."/>
            <person name="McLean J."/>
            <person name="Mooney P."/>
            <person name="Moule S."/>
            <person name="Mungall K.L."/>
            <person name="Murphy L.D."/>
            <person name="Niblett D."/>
            <person name="Odell C."/>
            <person name="Oliver K."/>
            <person name="O'Neil S."/>
            <person name="Pearson D."/>
            <person name="Quail M.A."/>
            <person name="Rabbinowitsch E."/>
            <person name="Rutherford K.M."/>
            <person name="Rutter S."/>
            <person name="Saunders D."/>
            <person name="Seeger K."/>
            <person name="Sharp S."/>
            <person name="Skelton J."/>
            <person name="Simmonds M.N."/>
            <person name="Squares R."/>
            <person name="Squares S."/>
            <person name="Stevens K."/>
            <person name="Taylor K."/>
            <person name="Taylor R.G."/>
            <person name="Tivey A."/>
            <person name="Walsh S.V."/>
            <person name="Warren T."/>
            <person name="Whitehead S."/>
            <person name="Woodward J.R."/>
            <person name="Volckaert G."/>
            <person name="Aert R."/>
            <person name="Robben J."/>
            <person name="Grymonprez B."/>
            <person name="Weltjens I."/>
            <person name="Vanstreels E."/>
            <person name="Rieger M."/>
            <person name="Schaefer M."/>
            <person name="Mueller-Auer S."/>
            <person name="Gabel C."/>
            <person name="Fuchs M."/>
            <person name="Duesterhoeft A."/>
            <person name="Fritzc C."/>
            <person name="Holzer E."/>
            <person name="Moestl D."/>
            <person name="Hilbert H."/>
            <person name="Borzym K."/>
            <person name="Langer I."/>
            <person name="Beck A."/>
            <person name="Lehrach H."/>
            <person name="Reinhardt R."/>
            <person name="Pohl T.M."/>
            <person name="Eger P."/>
            <person name="Zimmermann W."/>
            <person name="Wedler H."/>
            <person name="Wambutt R."/>
            <person name="Purnelle B."/>
            <person name="Goffeau A."/>
            <person name="Cadieu E."/>
            <person name="Dreano S."/>
            <person name="Gloux S."/>
            <person name="Lelaure V."/>
            <person name="Mottier S."/>
            <person name="Galibert F."/>
            <person name="Aves S.J."/>
            <person name="Xiang Z."/>
            <person name="Hunt C."/>
            <person name="Moore K."/>
            <person name="Hurst S.M."/>
            <person name="Lucas M."/>
            <person name="Rochet M."/>
            <person name="Gaillardin C."/>
            <person name="Tallada V.A."/>
            <person name="Garzon A."/>
            <person name="Thode G."/>
            <person name="Daga R.R."/>
            <person name="Cruzado L."/>
            <person name="Jimenez J."/>
            <person name="Sanchez M."/>
            <person name="del Rey F."/>
            <person name="Benito J."/>
            <person name="Dominguez A."/>
            <person name="Revuelta J.L."/>
            <person name="Moreno S."/>
            <person name="Armstrong J."/>
            <person name="Forsburg S.L."/>
            <person name="Cerutti L."/>
            <person name="Lowe T."/>
            <person name="McCombie W.R."/>
            <person name="Paulsen I."/>
            <person name="Potashkin J."/>
            <person name="Shpakovski G.V."/>
            <person name="Ussery D."/>
            <person name="Barrell B.G."/>
            <person name="Nurse P."/>
        </authorList>
    </citation>
    <scope>NUCLEOTIDE SEQUENCE [LARGE SCALE GENOMIC DNA]</scope>
    <source>
        <strain>972 / ATCC 24843</strain>
    </source>
</reference>
<reference key="2">
    <citation type="journal article" date="2006" name="Nat. Biotechnol.">
        <title>ORFeome cloning and global analysis of protein localization in the fission yeast Schizosaccharomyces pombe.</title>
        <authorList>
            <person name="Matsuyama A."/>
            <person name="Arai R."/>
            <person name="Yashiroda Y."/>
            <person name="Shirai A."/>
            <person name="Kamata A."/>
            <person name="Sekido S."/>
            <person name="Kobayashi Y."/>
            <person name="Hashimoto A."/>
            <person name="Hamamoto M."/>
            <person name="Hiraoka Y."/>
            <person name="Horinouchi S."/>
            <person name="Yoshida M."/>
        </authorList>
    </citation>
    <scope>SUBCELLULAR LOCATION [LARGE SCALE ANALYSIS]</scope>
</reference>
<reference key="3">
    <citation type="journal article" date="2008" name="J. Proteome Res.">
        <title>Phosphoproteome analysis of fission yeast.</title>
        <authorList>
            <person name="Wilson-Grady J.T."/>
            <person name="Villen J."/>
            <person name="Gygi S.P."/>
        </authorList>
    </citation>
    <scope>PHOSPHORYLATION [LARGE SCALE ANALYSIS] AT SER-311</scope>
    <scope>IDENTIFICATION BY MASS SPECTROMETRY</scope>
</reference>